<name>UVRA_VIBPA</name>
<organism>
    <name type="scientific">Vibrio parahaemolyticus serotype O3:K6 (strain RIMD 2210633)</name>
    <dbReference type="NCBI Taxonomy" id="223926"/>
    <lineage>
        <taxon>Bacteria</taxon>
        <taxon>Pseudomonadati</taxon>
        <taxon>Pseudomonadota</taxon>
        <taxon>Gammaproteobacteria</taxon>
        <taxon>Vibrionales</taxon>
        <taxon>Vibrionaceae</taxon>
        <taxon>Vibrio</taxon>
    </lineage>
</organism>
<reference key="1">
    <citation type="journal article" date="2003" name="Lancet">
        <title>Genome sequence of Vibrio parahaemolyticus: a pathogenic mechanism distinct from that of V. cholerae.</title>
        <authorList>
            <person name="Makino K."/>
            <person name="Oshima K."/>
            <person name="Kurokawa K."/>
            <person name="Yokoyama K."/>
            <person name="Uda T."/>
            <person name="Tagomori K."/>
            <person name="Iijima Y."/>
            <person name="Najima M."/>
            <person name="Nakano M."/>
            <person name="Yamashita A."/>
            <person name="Kubota Y."/>
            <person name="Kimura S."/>
            <person name="Yasunaga T."/>
            <person name="Honda T."/>
            <person name="Shinagawa H."/>
            <person name="Hattori M."/>
            <person name="Iida T."/>
        </authorList>
    </citation>
    <scope>NUCLEOTIDE SEQUENCE [LARGE SCALE GENOMIC DNA]</scope>
    <source>
        <strain>RIMD 2210633</strain>
    </source>
</reference>
<evidence type="ECO:0000255" key="1">
    <source>
        <dbReference type="HAMAP-Rule" id="MF_00205"/>
    </source>
</evidence>
<feature type="chain" id="PRO_0000093112" description="UvrABC system protein A">
    <location>
        <begin position="1"/>
        <end position="940"/>
    </location>
</feature>
<feature type="domain" description="ABC transporter 1" evidence="1">
    <location>
        <begin position="309"/>
        <end position="586"/>
    </location>
</feature>
<feature type="domain" description="ABC transporter 2" evidence="1">
    <location>
        <begin position="606"/>
        <end position="936"/>
    </location>
</feature>
<feature type="zinc finger region" description="C4-type" evidence="1">
    <location>
        <begin position="252"/>
        <end position="279"/>
    </location>
</feature>
<feature type="zinc finger region" description="C4-type" evidence="1">
    <location>
        <begin position="739"/>
        <end position="765"/>
    </location>
</feature>
<feature type="binding site" evidence="1">
    <location>
        <begin position="31"/>
        <end position="38"/>
    </location>
    <ligand>
        <name>ATP</name>
        <dbReference type="ChEBI" id="CHEBI:30616"/>
    </ligand>
</feature>
<feature type="binding site" evidence="1">
    <location>
        <begin position="639"/>
        <end position="646"/>
    </location>
    <ligand>
        <name>ATP</name>
        <dbReference type="ChEBI" id="CHEBI:30616"/>
    </ligand>
</feature>
<comment type="function">
    <text evidence="1">The UvrABC repair system catalyzes the recognition and processing of DNA lesions. UvrA is an ATPase and a DNA-binding protein. A damage recognition complex composed of 2 UvrA and 2 UvrB subunits scans DNA for abnormalities. When the presence of a lesion has been verified by UvrB, the UvrA molecules dissociate.</text>
</comment>
<comment type="subunit">
    <text evidence="1">Forms a heterotetramer with UvrB during the search for lesions.</text>
</comment>
<comment type="subcellular location">
    <subcellularLocation>
        <location evidence="1">Cytoplasm</location>
    </subcellularLocation>
</comment>
<comment type="similarity">
    <text evidence="1">Belongs to the ABC transporter superfamily. UvrA family.</text>
</comment>
<proteinExistence type="inferred from homology"/>
<accession>Q87LA0</accession>
<sequence length="940" mass="103871">MDKIEVRGARTHNLKDINLTIPRDKLTVITGLSGSGKSSLAFDTLYAEGQRRYVESLSAYARQFLSLMEKPDVDHIEGLSPAISIEQKSTSHNPRSTVGTITEVYDYLRLLYARVGEPRCPTHHAPLAAQTVSQMVDKVLELPEGSKMMLLAPIVKERKGEHVKTLENLAAQGFIRARIDGETCDLSDPPTLELHKKHTIEVVVDRFKVRPDLQQRLAESFETTLELSGGIAVVAPMDGDGEEIIFSANFACPQCGYSMQELEPRLFSFNNPAGACGTCDGLGVQQYFDPSRVIQDDSLSLAQGAIRGWDQKNYYYFQMLTSLADHYGFDLHAPFNSLPKKTQDVILKGSGRTEIEFKYINDRGDIRVKRHPFEGILNTLERRYRDTESNSVREELAKYISTKSCSSCGGTRLRLEARNVFIADTTLPEIVELSIADALTFFQTLKLEGQRAQIAEKVMKEINDRLQFLVNVGLNYLNLSRSAETLSGGEAQRIRLASQIGAGLVGVMYVLDEPSIGLHQRDNERLLKTLTHLRDLGNTVLVVEHDEDAIRCADHVIDIGPGAGVHGGNVVAEGTMDEIIANPNSLTGQYLSGAKEIAVPKERTPRDPKKTVELLGATGNNLKNVDLSIPVGLFSCITGVSGSGKSTLINDTFFKIAHTQLNGATTAHPSPYKSIKGLEHFDKVIDIDQSPIGRTPRSNPATYTGIFTPIRELFAGTQESRSRGYKPGRFSFNVRGGRCEACQGDGVIKVEMHFLPDVYVPCDVCKGKRYNRETLEVRYKGKTIDEVLEMTVEDARTFFDPVPAIARKLQTLMDVGLSYIRLGQAATTLSGGEAQRVKLARELSKRDTGKTLYILDEPTTGLHFHDIQQLLTVLHRLRDHGNTVVVIEHNLDVIKTADWIIDLGPEGGQGGGEIIAQGTPEDVSQIEGSHTARFLKPMLK</sequence>
<keyword id="KW-0067">ATP-binding</keyword>
<keyword id="KW-0963">Cytoplasm</keyword>
<keyword id="KW-0227">DNA damage</keyword>
<keyword id="KW-0228">DNA excision</keyword>
<keyword id="KW-0234">DNA repair</keyword>
<keyword id="KW-0238">DNA-binding</keyword>
<keyword id="KW-0267">Excision nuclease</keyword>
<keyword id="KW-0479">Metal-binding</keyword>
<keyword id="KW-0547">Nucleotide-binding</keyword>
<keyword id="KW-0677">Repeat</keyword>
<keyword id="KW-0742">SOS response</keyword>
<keyword id="KW-0862">Zinc</keyword>
<keyword id="KW-0863">Zinc-finger</keyword>
<dbReference type="EMBL" id="BA000031">
    <property type="protein sequence ID" value="BAC60975.1"/>
    <property type="molecule type" value="Genomic_DNA"/>
</dbReference>
<dbReference type="RefSeq" id="NP_799091.1">
    <property type="nucleotide sequence ID" value="NC_004603.1"/>
</dbReference>
<dbReference type="RefSeq" id="WP_005490537.1">
    <property type="nucleotide sequence ID" value="NC_004603.1"/>
</dbReference>
<dbReference type="SMR" id="Q87LA0"/>
<dbReference type="GeneID" id="1190257"/>
<dbReference type="KEGG" id="vpa:VP2712"/>
<dbReference type="PATRIC" id="fig|223926.6.peg.2608"/>
<dbReference type="eggNOG" id="COG0178">
    <property type="taxonomic scope" value="Bacteria"/>
</dbReference>
<dbReference type="HOGENOM" id="CLU_001370_0_2_6"/>
<dbReference type="Proteomes" id="UP000002493">
    <property type="component" value="Chromosome 1"/>
</dbReference>
<dbReference type="GO" id="GO:0005737">
    <property type="term" value="C:cytoplasm"/>
    <property type="evidence" value="ECO:0007669"/>
    <property type="project" value="UniProtKB-SubCell"/>
</dbReference>
<dbReference type="GO" id="GO:0009380">
    <property type="term" value="C:excinuclease repair complex"/>
    <property type="evidence" value="ECO:0007669"/>
    <property type="project" value="InterPro"/>
</dbReference>
<dbReference type="GO" id="GO:0005524">
    <property type="term" value="F:ATP binding"/>
    <property type="evidence" value="ECO:0007669"/>
    <property type="project" value="UniProtKB-UniRule"/>
</dbReference>
<dbReference type="GO" id="GO:0016887">
    <property type="term" value="F:ATP hydrolysis activity"/>
    <property type="evidence" value="ECO:0007669"/>
    <property type="project" value="InterPro"/>
</dbReference>
<dbReference type="GO" id="GO:0003677">
    <property type="term" value="F:DNA binding"/>
    <property type="evidence" value="ECO:0007669"/>
    <property type="project" value="UniProtKB-UniRule"/>
</dbReference>
<dbReference type="GO" id="GO:0009381">
    <property type="term" value="F:excinuclease ABC activity"/>
    <property type="evidence" value="ECO:0007669"/>
    <property type="project" value="UniProtKB-UniRule"/>
</dbReference>
<dbReference type="GO" id="GO:0008270">
    <property type="term" value="F:zinc ion binding"/>
    <property type="evidence" value="ECO:0007669"/>
    <property type="project" value="UniProtKB-UniRule"/>
</dbReference>
<dbReference type="GO" id="GO:0006289">
    <property type="term" value="P:nucleotide-excision repair"/>
    <property type="evidence" value="ECO:0007669"/>
    <property type="project" value="UniProtKB-UniRule"/>
</dbReference>
<dbReference type="GO" id="GO:0009432">
    <property type="term" value="P:SOS response"/>
    <property type="evidence" value="ECO:0007669"/>
    <property type="project" value="UniProtKB-UniRule"/>
</dbReference>
<dbReference type="CDD" id="cd03270">
    <property type="entry name" value="ABC_UvrA_I"/>
    <property type="match status" value="1"/>
</dbReference>
<dbReference type="CDD" id="cd03271">
    <property type="entry name" value="ABC_UvrA_II"/>
    <property type="match status" value="1"/>
</dbReference>
<dbReference type="FunFam" id="1.10.8.280:FF:000001">
    <property type="entry name" value="UvrABC system protein A"/>
    <property type="match status" value="1"/>
</dbReference>
<dbReference type="FunFam" id="1.20.1580.10:FF:000002">
    <property type="entry name" value="UvrABC system protein A"/>
    <property type="match status" value="1"/>
</dbReference>
<dbReference type="FunFam" id="1.20.1580.10:FF:000003">
    <property type="entry name" value="UvrABC system protein A"/>
    <property type="match status" value="1"/>
</dbReference>
<dbReference type="FunFam" id="3.30.190.20:FF:000003">
    <property type="entry name" value="UvrABC system protein A"/>
    <property type="match status" value="1"/>
</dbReference>
<dbReference type="Gene3D" id="1.10.8.280">
    <property type="entry name" value="ABC transporter ATPase domain-like"/>
    <property type="match status" value="1"/>
</dbReference>
<dbReference type="Gene3D" id="1.20.1580.10">
    <property type="entry name" value="ABC transporter ATPase like domain"/>
    <property type="match status" value="2"/>
</dbReference>
<dbReference type="Gene3D" id="3.30.1490.20">
    <property type="entry name" value="ATP-grasp fold, A domain"/>
    <property type="match status" value="1"/>
</dbReference>
<dbReference type="Gene3D" id="3.40.50.300">
    <property type="entry name" value="P-loop containing nucleotide triphosphate hydrolases"/>
    <property type="match status" value="2"/>
</dbReference>
<dbReference type="HAMAP" id="MF_00205">
    <property type="entry name" value="UvrA"/>
    <property type="match status" value="1"/>
</dbReference>
<dbReference type="InterPro" id="IPR003439">
    <property type="entry name" value="ABC_transporter-like_ATP-bd"/>
</dbReference>
<dbReference type="InterPro" id="IPR017871">
    <property type="entry name" value="ABC_transporter-like_CS"/>
</dbReference>
<dbReference type="InterPro" id="IPR013815">
    <property type="entry name" value="ATP_grasp_subdomain_1"/>
</dbReference>
<dbReference type="InterPro" id="IPR027417">
    <property type="entry name" value="P-loop_NTPase"/>
</dbReference>
<dbReference type="InterPro" id="IPR004602">
    <property type="entry name" value="UvrA"/>
</dbReference>
<dbReference type="InterPro" id="IPR041552">
    <property type="entry name" value="UvrA_DNA-bd"/>
</dbReference>
<dbReference type="InterPro" id="IPR041102">
    <property type="entry name" value="UvrA_inter"/>
</dbReference>
<dbReference type="NCBIfam" id="NF001503">
    <property type="entry name" value="PRK00349.1"/>
    <property type="match status" value="1"/>
</dbReference>
<dbReference type="NCBIfam" id="TIGR00630">
    <property type="entry name" value="uvra"/>
    <property type="match status" value="1"/>
</dbReference>
<dbReference type="PANTHER" id="PTHR43152">
    <property type="entry name" value="UVRABC SYSTEM PROTEIN A"/>
    <property type="match status" value="1"/>
</dbReference>
<dbReference type="PANTHER" id="PTHR43152:SF3">
    <property type="entry name" value="UVRABC SYSTEM PROTEIN A"/>
    <property type="match status" value="1"/>
</dbReference>
<dbReference type="Pfam" id="PF00005">
    <property type="entry name" value="ABC_tran"/>
    <property type="match status" value="1"/>
</dbReference>
<dbReference type="Pfam" id="PF17755">
    <property type="entry name" value="UvrA_DNA-bind"/>
    <property type="match status" value="1"/>
</dbReference>
<dbReference type="Pfam" id="PF17760">
    <property type="entry name" value="UvrA_inter"/>
    <property type="match status" value="1"/>
</dbReference>
<dbReference type="SUPFAM" id="SSF52540">
    <property type="entry name" value="P-loop containing nucleoside triphosphate hydrolases"/>
    <property type="match status" value="2"/>
</dbReference>
<dbReference type="PROSITE" id="PS00211">
    <property type="entry name" value="ABC_TRANSPORTER_1"/>
    <property type="match status" value="2"/>
</dbReference>
<dbReference type="PROSITE" id="PS50893">
    <property type="entry name" value="ABC_TRANSPORTER_2"/>
    <property type="match status" value="2"/>
</dbReference>
<protein>
    <recommendedName>
        <fullName evidence="1">UvrABC system protein A</fullName>
        <shortName evidence="1">UvrA protein</shortName>
    </recommendedName>
    <alternativeName>
        <fullName evidence="1">Excinuclease ABC subunit A</fullName>
    </alternativeName>
</protein>
<gene>
    <name evidence="1" type="primary">uvrA</name>
    <name type="ordered locus">VP2712</name>
</gene>